<feature type="chain" id="PRO_1000191091" description="Multidrug resistance protein MdtK">
    <location>
        <begin position="1"/>
        <end position="457"/>
    </location>
</feature>
<feature type="transmembrane region" description="Helical" evidence="1">
    <location>
        <begin position="11"/>
        <end position="31"/>
    </location>
</feature>
<feature type="transmembrane region" description="Helical" evidence="1">
    <location>
        <begin position="53"/>
        <end position="73"/>
    </location>
</feature>
<feature type="transmembrane region" description="Helical" evidence="1">
    <location>
        <begin position="93"/>
        <end position="113"/>
    </location>
</feature>
<feature type="transmembrane region" description="Helical" evidence="1">
    <location>
        <begin position="127"/>
        <end position="147"/>
    </location>
</feature>
<feature type="transmembrane region" description="Helical" evidence="1">
    <location>
        <begin position="160"/>
        <end position="180"/>
    </location>
</feature>
<feature type="transmembrane region" description="Helical" evidence="1">
    <location>
        <begin position="189"/>
        <end position="209"/>
    </location>
</feature>
<feature type="transmembrane region" description="Helical" evidence="1">
    <location>
        <begin position="243"/>
        <end position="263"/>
    </location>
</feature>
<feature type="transmembrane region" description="Helical" evidence="1">
    <location>
        <begin position="276"/>
        <end position="296"/>
    </location>
</feature>
<feature type="transmembrane region" description="Helical" evidence="1">
    <location>
        <begin position="314"/>
        <end position="334"/>
    </location>
</feature>
<feature type="transmembrane region" description="Helical" evidence="1">
    <location>
        <begin position="350"/>
        <end position="370"/>
    </location>
</feature>
<feature type="transmembrane region" description="Helical" evidence="1">
    <location>
        <begin position="387"/>
        <end position="407"/>
    </location>
</feature>
<feature type="transmembrane region" description="Helical" evidence="1">
    <location>
        <begin position="418"/>
        <end position="438"/>
    </location>
</feature>
<reference key="1">
    <citation type="journal article" date="2008" name="J. Bacteriol.">
        <title>Insights into the environmental resistance gene pool from the genome sequence of the multidrug-resistant environmental isolate Escherichia coli SMS-3-5.</title>
        <authorList>
            <person name="Fricke W.F."/>
            <person name="Wright M.S."/>
            <person name="Lindell A.H."/>
            <person name="Harkins D.M."/>
            <person name="Baker-Austin C."/>
            <person name="Ravel J."/>
            <person name="Stepanauskas R."/>
        </authorList>
    </citation>
    <scope>NUCLEOTIDE SEQUENCE [LARGE SCALE GENOMIC DNA]</scope>
    <source>
        <strain>SMS-3-5 / SECEC</strain>
    </source>
</reference>
<gene>
    <name evidence="1" type="primary">mdtK</name>
    <name type="ordered locus">EcSMS35_1534</name>
</gene>
<organism>
    <name type="scientific">Escherichia coli (strain SMS-3-5 / SECEC)</name>
    <dbReference type="NCBI Taxonomy" id="439855"/>
    <lineage>
        <taxon>Bacteria</taxon>
        <taxon>Pseudomonadati</taxon>
        <taxon>Pseudomonadota</taxon>
        <taxon>Gammaproteobacteria</taxon>
        <taxon>Enterobacterales</taxon>
        <taxon>Enterobacteriaceae</taxon>
        <taxon>Escherichia</taxon>
    </lineage>
</organism>
<name>MDTK_ECOSM</name>
<keyword id="KW-0050">Antiport</keyword>
<keyword id="KW-0997">Cell inner membrane</keyword>
<keyword id="KW-1003">Cell membrane</keyword>
<keyword id="KW-0406">Ion transport</keyword>
<keyword id="KW-0472">Membrane</keyword>
<keyword id="KW-0915">Sodium</keyword>
<keyword id="KW-0739">Sodium transport</keyword>
<keyword id="KW-0812">Transmembrane</keyword>
<keyword id="KW-1133">Transmembrane helix</keyword>
<keyword id="KW-0813">Transport</keyword>
<evidence type="ECO:0000255" key="1">
    <source>
        <dbReference type="HAMAP-Rule" id="MF_00400"/>
    </source>
</evidence>
<sequence length="457" mass="49431">MQKYISEARLLLALAIPVILAQIAQTAMGFVDTVMAGGYSATDMAAVAIGTSIWLPAILFGHGLLLALTPVIAQLNGSGRRERIAHQVRQGFWLAGFVSVLIMLVLWNAGYIIRSMENIDPALADKAVGYLRALLWGAPGYLFFQVARNQCEGLAKTKPGMVMGFIGLLVNIPVNYIFIYGHFGMPELGGVGCGVATAAVYWVMFLAMVSYIKRARSMRDIRNEKGTAKPDPAVMKRLIQLGLPIALALFFEVTLFAVVALLVSPLGIVDVAGHQIALNFSSLMFVLPMSLAAAVTIRVGYRLGQGSTLDAQTAARTGLMVGVCMATLTAIFTVSLREQIALLYNDNPEVVTLAAHLMLLAAVYQISDSIQVIGSGILRGYKDTRSIFYITFTAYWVLGLPSGYILALTDLVVEPMGPAGFWIGFIIGLTSAAIMMMLRMRFLQRLPSAIILQRAAR</sequence>
<proteinExistence type="inferred from homology"/>
<comment type="function">
    <text evidence="1">Multidrug efflux pump that functions probably as a Na(+)/drug antiporter.</text>
</comment>
<comment type="subcellular location">
    <subcellularLocation>
        <location evidence="1">Cell inner membrane</location>
        <topology evidence="1">Multi-pass membrane protein</topology>
    </subcellularLocation>
</comment>
<comment type="similarity">
    <text evidence="1">Belongs to the multi antimicrobial extrusion (MATE) (TC 2.A.66.1) family. MdtK subfamily.</text>
</comment>
<protein>
    <recommendedName>
        <fullName evidence="1">Multidrug resistance protein MdtK</fullName>
    </recommendedName>
    <alternativeName>
        <fullName evidence="1">Multidrug-efflux transporter</fullName>
    </alternativeName>
</protein>
<accession>B1LEM1</accession>
<dbReference type="EMBL" id="CP000970">
    <property type="protein sequence ID" value="ACB18700.1"/>
    <property type="molecule type" value="Genomic_DNA"/>
</dbReference>
<dbReference type="RefSeq" id="WP_001174939.1">
    <property type="nucleotide sequence ID" value="NC_010498.1"/>
</dbReference>
<dbReference type="SMR" id="B1LEM1"/>
<dbReference type="KEGG" id="ecm:EcSMS35_1534"/>
<dbReference type="HOGENOM" id="CLU_012893_6_0_6"/>
<dbReference type="Proteomes" id="UP000007011">
    <property type="component" value="Chromosome"/>
</dbReference>
<dbReference type="GO" id="GO:0005886">
    <property type="term" value="C:plasma membrane"/>
    <property type="evidence" value="ECO:0007669"/>
    <property type="project" value="UniProtKB-SubCell"/>
</dbReference>
<dbReference type="GO" id="GO:0015297">
    <property type="term" value="F:antiporter activity"/>
    <property type="evidence" value="ECO:0007669"/>
    <property type="project" value="UniProtKB-UniRule"/>
</dbReference>
<dbReference type="GO" id="GO:0042910">
    <property type="term" value="F:xenobiotic transmembrane transporter activity"/>
    <property type="evidence" value="ECO:0007669"/>
    <property type="project" value="UniProtKB-UniRule"/>
</dbReference>
<dbReference type="GO" id="GO:0006814">
    <property type="term" value="P:sodium ion transport"/>
    <property type="evidence" value="ECO:0007669"/>
    <property type="project" value="UniProtKB-UniRule"/>
</dbReference>
<dbReference type="GO" id="GO:0006855">
    <property type="term" value="P:xenobiotic transmembrane transport"/>
    <property type="evidence" value="ECO:0007669"/>
    <property type="project" value="UniProtKB-UniRule"/>
</dbReference>
<dbReference type="CDD" id="cd13131">
    <property type="entry name" value="MATE_NorM_like"/>
    <property type="match status" value="1"/>
</dbReference>
<dbReference type="HAMAP" id="MF_00400">
    <property type="entry name" value="MdtK"/>
    <property type="match status" value="1"/>
</dbReference>
<dbReference type="InterPro" id="IPR002528">
    <property type="entry name" value="MATE_fam"/>
</dbReference>
<dbReference type="InterPro" id="IPR050222">
    <property type="entry name" value="MATE_MdtK"/>
</dbReference>
<dbReference type="InterPro" id="IPR048279">
    <property type="entry name" value="MdtK-like"/>
</dbReference>
<dbReference type="InterPro" id="IPR022913">
    <property type="entry name" value="Multidrug-R_MdtK"/>
</dbReference>
<dbReference type="NCBIfam" id="TIGR00797">
    <property type="entry name" value="matE"/>
    <property type="match status" value="1"/>
</dbReference>
<dbReference type="PANTHER" id="PTHR43298:SF2">
    <property type="entry name" value="FMN_FAD EXPORTER YEEO-RELATED"/>
    <property type="match status" value="1"/>
</dbReference>
<dbReference type="PANTHER" id="PTHR43298">
    <property type="entry name" value="MULTIDRUG RESISTANCE PROTEIN NORM-RELATED"/>
    <property type="match status" value="1"/>
</dbReference>
<dbReference type="Pfam" id="PF01554">
    <property type="entry name" value="MatE"/>
    <property type="match status" value="2"/>
</dbReference>
<dbReference type="PIRSF" id="PIRSF006603">
    <property type="entry name" value="DinF"/>
    <property type="match status" value="1"/>
</dbReference>